<accession>B7M394</accession>
<organism>
    <name type="scientific">Escherichia coli O8 (strain IAI1)</name>
    <dbReference type="NCBI Taxonomy" id="585034"/>
    <lineage>
        <taxon>Bacteria</taxon>
        <taxon>Pseudomonadati</taxon>
        <taxon>Pseudomonadota</taxon>
        <taxon>Gammaproteobacteria</taxon>
        <taxon>Enterobacterales</taxon>
        <taxon>Enterobacteriaceae</taxon>
        <taxon>Escherichia</taxon>
    </lineage>
</organism>
<evidence type="ECO:0000255" key="1">
    <source>
        <dbReference type="HAMAP-Rule" id="MF_00617"/>
    </source>
</evidence>
<protein>
    <recommendedName>
        <fullName evidence="1">Mannosyl-3-phosphoglycerate phosphatase</fullName>
        <shortName evidence="1">MPGP</shortName>
        <ecNumber evidence="1">3.1.3.70</ecNumber>
    </recommendedName>
</protein>
<feature type="chain" id="PRO_1000130433" description="Mannosyl-3-phosphoglycerate phosphatase">
    <location>
        <begin position="1"/>
        <end position="271"/>
    </location>
</feature>
<feature type="active site" description="Nucleophile" evidence="1">
    <location>
        <position position="13"/>
    </location>
</feature>
<feature type="binding site" evidence="1">
    <location>
        <position position="13"/>
    </location>
    <ligand>
        <name>Mg(2+)</name>
        <dbReference type="ChEBI" id="CHEBI:18420"/>
    </ligand>
</feature>
<feature type="binding site" evidence="1">
    <location>
        <position position="15"/>
    </location>
    <ligand>
        <name>Mg(2+)</name>
        <dbReference type="ChEBI" id="CHEBI:18420"/>
    </ligand>
</feature>
<feature type="binding site" evidence="1">
    <location>
        <position position="214"/>
    </location>
    <ligand>
        <name>Mg(2+)</name>
        <dbReference type="ChEBI" id="CHEBI:18420"/>
    </ligand>
</feature>
<keyword id="KW-0963">Cytoplasm</keyword>
<keyword id="KW-0378">Hydrolase</keyword>
<keyword id="KW-0460">Magnesium</keyword>
<keyword id="KW-0479">Metal-binding</keyword>
<name>MPGP_ECO8A</name>
<reference key="1">
    <citation type="journal article" date="2009" name="PLoS Genet.">
        <title>Organised genome dynamics in the Escherichia coli species results in highly diverse adaptive paths.</title>
        <authorList>
            <person name="Touchon M."/>
            <person name="Hoede C."/>
            <person name="Tenaillon O."/>
            <person name="Barbe V."/>
            <person name="Baeriswyl S."/>
            <person name="Bidet P."/>
            <person name="Bingen E."/>
            <person name="Bonacorsi S."/>
            <person name="Bouchier C."/>
            <person name="Bouvet O."/>
            <person name="Calteau A."/>
            <person name="Chiapello H."/>
            <person name="Clermont O."/>
            <person name="Cruveiller S."/>
            <person name="Danchin A."/>
            <person name="Diard M."/>
            <person name="Dossat C."/>
            <person name="Karoui M.E."/>
            <person name="Frapy E."/>
            <person name="Garry L."/>
            <person name="Ghigo J.M."/>
            <person name="Gilles A.M."/>
            <person name="Johnson J."/>
            <person name="Le Bouguenec C."/>
            <person name="Lescat M."/>
            <person name="Mangenot S."/>
            <person name="Martinez-Jehanne V."/>
            <person name="Matic I."/>
            <person name="Nassif X."/>
            <person name="Oztas S."/>
            <person name="Petit M.A."/>
            <person name="Pichon C."/>
            <person name="Rouy Z."/>
            <person name="Ruf C.S."/>
            <person name="Schneider D."/>
            <person name="Tourret J."/>
            <person name="Vacherie B."/>
            <person name="Vallenet D."/>
            <person name="Medigue C."/>
            <person name="Rocha E.P.C."/>
            <person name="Denamur E."/>
        </authorList>
    </citation>
    <scope>NUCLEOTIDE SEQUENCE [LARGE SCALE GENOMIC DNA]</scope>
    <source>
        <strain>IAI1</strain>
    </source>
</reference>
<proteinExistence type="inferred from homology"/>
<dbReference type="EC" id="3.1.3.70" evidence="1"/>
<dbReference type="EMBL" id="CU928160">
    <property type="protein sequence ID" value="CAQ98886.1"/>
    <property type="molecule type" value="Genomic_DNA"/>
</dbReference>
<dbReference type="RefSeq" id="WP_000491501.1">
    <property type="nucleotide sequence ID" value="NC_011741.1"/>
</dbReference>
<dbReference type="SMR" id="B7M394"/>
<dbReference type="KEGG" id="ecr:ECIAI1_2035"/>
<dbReference type="HOGENOM" id="CLU_063016_1_0_6"/>
<dbReference type="GO" id="GO:0005829">
    <property type="term" value="C:cytosol"/>
    <property type="evidence" value="ECO:0007669"/>
    <property type="project" value="TreeGrafter"/>
</dbReference>
<dbReference type="GO" id="GO:0000287">
    <property type="term" value="F:magnesium ion binding"/>
    <property type="evidence" value="ECO:0007669"/>
    <property type="project" value="TreeGrafter"/>
</dbReference>
<dbReference type="GO" id="GO:0050531">
    <property type="term" value="F:mannosyl-3-phosphoglycerate phosphatase activity"/>
    <property type="evidence" value="ECO:0007669"/>
    <property type="project" value="UniProtKB-UniRule"/>
</dbReference>
<dbReference type="GO" id="GO:0051479">
    <property type="term" value="P:mannosylglycerate biosynthetic process"/>
    <property type="evidence" value="ECO:0007669"/>
    <property type="project" value="InterPro"/>
</dbReference>
<dbReference type="CDD" id="cd07507">
    <property type="entry name" value="HAD_Pase"/>
    <property type="match status" value="1"/>
</dbReference>
<dbReference type="Gene3D" id="3.40.50.1000">
    <property type="entry name" value="HAD superfamily/HAD-like"/>
    <property type="match status" value="1"/>
</dbReference>
<dbReference type="Gene3D" id="3.30.980.20">
    <property type="entry name" value="Putative mannosyl-3-phosphoglycerate phosphatase, domain 2"/>
    <property type="match status" value="1"/>
</dbReference>
<dbReference type="HAMAP" id="MF_00617">
    <property type="entry name" value="MPGP_rel"/>
    <property type="match status" value="1"/>
</dbReference>
<dbReference type="InterPro" id="IPR036412">
    <property type="entry name" value="HAD-like_sf"/>
</dbReference>
<dbReference type="InterPro" id="IPR006381">
    <property type="entry name" value="HAD-SF-IIB-MPGP"/>
</dbReference>
<dbReference type="InterPro" id="IPR006379">
    <property type="entry name" value="HAD-SF_hydro_IIB"/>
</dbReference>
<dbReference type="InterPro" id="IPR023214">
    <property type="entry name" value="HAD_sf"/>
</dbReference>
<dbReference type="InterPro" id="IPR012815">
    <property type="entry name" value="MPG_Pase"/>
</dbReference>
<dbReference type="NCBIfam" id="TIGR01484">
    <property type="entry name" value="HAD-SF-IIB"/>
    <property type="match status" value="1"/>
</dbReference>
<dbReference type="NCBIfam" id="TIGR01486">
    <property type="entry name" value="HAD-SF-IIB-MPGP"/>
    <property type="match status" value="1"/>
</dbReference>
<dbReference type="NCBIfam" id="TIGR02463">
    <property type="entry name" value="MPGP_rel"/>
    <property type="match status" value="1"/>
</dbReference>
<dbReference type="NCBIfam" id="NF002976">
    <property type="entry name" value="PRK03669.1"/>
    <property type="match status" value="1"/>
</dbReference>
<dbReference type="PANTHER" id="PTHR10000:SF8">
    <property type="entry name" value="HAD SUPERFAMILY HYDROLASE-LIKE, TYPE 3"/>
    <property type="match status" value="1"/>
</dbReference>
<dbReference type="PANTHER" id="PTHR10000">
    <property type="entry name" value="PHOSPHOSERINE PHOSPHATASE"/>
    <property type="match status" value="1"/>
</dbReference>
<dbReference type="Pfam" id="PF08282">
    <property type="entry name" value="Hydrolase_3"/>
    <property type="match status" value="1"/>
</dbReference>
<dbReference type="SFLD" id="SFLDG01142">
    <property type="entry name" value="C2.B.2:_Mannosyl-3-phosphoglyc"/>
    <property type="match status" value="1"/>
</dbReference>
<dbReference type="SFLD" id="SFLDS00003">
    <property type="entry name" value="Haloacid_Dehalogenase"/>
    <property type="match status" value="1"/>
</dbReference>
<dbReference type="SUPFAM" id="SSF56784">
    <property type="entry name" value="HAD-like"/>
    <property type="match status" value="1"/>
</dbReference>
<sequence length="271" mass="30456">MFSIQQPLLVFSDLDGTLLDSHSYDWQPAAPWLSRLREANVPVILCSSKTSAEMLYLQKTLGLQGLPLIAENGAVIQLAEQWQDIDGFPRIISGISHGEISQVLNTLREKEHFKFTTFDDVDDATIAEWTGLSRSQAALTQLHEASVTLIWRDSDERMAQFTARLNELGLQFMQGARFWHVLDASAGKDQAANWIIATYQQLSGKRPTTLGLGDGPNDAPLLEVMDYAVIVKGLNREGVHLHDEDPTRVWRTQREGPEGWREGLDHFFSAR</sequence>
<comment type="catalytic activity">
    <reaction evidence="1">
        <text>2-O-(alpha-D-mannosyl)-3-phosphoglycerate + H2O = (2R)-2-O-(alpha-D-mannosyl)-glycerate + phosphate</text>
        <dbReference type="Rhea" id="RHEA:19309"/>
        <dbReference type="ChEBI" id="CHEBI:15377"/>
        <dbReference type="ChEBI" id="CHEBI:43474"/>
        <dbReference type="ChEBI" id="CHEBI:57541"/>
        <dbReference type="ChEBI" id="CHEBI:57744"/>
        <dbReference type="EC" id="3.1.3.70"/>
    </reaction>
</comment>
<comment type="cofactor">
    <cofactor evidence="1">
        <name>Mg(2+)</name>
        <dbReference type="ChEBI" id="CHEBI:18420"/>
    </cofactor>
</comment>
<comment type="subcellular location">
    <subcellularLocation>
        <location evidence="1">Cytoplasm</location>
    </subcellularLocation>
</comment>
<comment type="similarity">
    <text evidence="1">Belongs to the HAD-like hydrolase superfamily. MPGP family.</text>
</comment>
<gene>
    <name type="ordered locus">ECIAI1_2035</name>
</gene>